<comment type="function">
    <text evidence="1">ATP-dependent RNA helicase involved spliceosome assembly and in nuclear splicing. Catalyzes an ATP-dependent conformational change of U2 snRNP. Bridges U1 and U2 snRNPs and enables stable U2 snRNP association with intron RNA (By similarity).</text>
</comment>
<comment type="catalytic activity">
    <reaction>
        <text>ATP + H2O = ADP + phosphate + H(+)</text>
        <dbReference type="Rhea" id="RHEA:13065"/>
        <dbReference type="ChEBI" id="CHEBI:15377"/>
        <dbReference type="ChEBI" id="CHEBI:15378"/>
        <dbReference type="ChEBI" id="CHEBI:30616"/>
        <dbReference type="ChEBI" id="CHEBI:43474"/>
        <dbReference type="ChEBI" id="CHEBI:456216"/>
        <dbReference type="EC" id="3.6.4.13"/>
    </reaction>
</comment>
<comment type="subcellular location">
    <subcellularLocation>
        <location evidence="1">Nucleus</location>
    </subcellularLocation>
</comment>
<comment type="domain">
    <text>The Q motif is unique to and characteristic of the DEAD box family of RNA helicases and controls ATP binding and hydrolysis.</text>
</comment>
<comment type="similarity">
    <text evidence="5">Belongs to the DEAD box helicase family. DDX46/PRP5 subfamily.</text>
</comment>
<name>PRP5_MYCMD</name>
<keyword id="KW-0067">ATP-binding</keyword>
<keyword id="KW-0347">Helicase</keyword>
<keyword id="KW-0378">Hydrolase</keyword>
<keyword id="KW-0507">mRNA processing</keyword>
<keyword id="KW-0508">mRNA splicing</keyword>
<keyword id="KW-0547">Nucleotide-binding</keyword>
<keyword id="KW-0539">Nucleus</keyword>
<keyword id="KW-1185">Reference proteome</keyword>
<reference key="1">
    <citation type="journal article" date="2006" name="Nature">
        <title>Insights from the genome of the biotrophic fungal plant pathogen Ustilago maydis.</title>
        <authorList>
            <person name="Kaemper J."/>
            <person name="Kahmann R."/>
            <person name="Boelker M."/>
            <person name="Ma L.-J."/>
            <person name="Brefort T."/>
            <person name="Saville B.J."/>
            <person name="Banuett F."/>
            <person name="Kronstad J.W."/>
            <person name="Gold S.E."/>
            <person name="Mueller O."/>
            <person name="Perlin M.H."/>
            <person name="Woesten H.A.B."/>
            <person name="de Vries R."/>
            <person name="Ruiz-Herrera J."/>
            <person name="Reynaga-Pena C.G."/>
            <person name="Snetselaar K."/>
            <person name="McCann M."/>
            <person name="Perez-Martin J."/>
            <person name="Feldbruegge M."/>
            <person name="Basse C.W."/>
            <person name="Steinberg G."/>
            <person name="Ibeas J.I."/>
            <person name="Holloman W."/>
            <person name="Guzman P."/>
            <person name="Farman M.L."/>
            <person name="Stajich J.E."/>
            <person name="Sentandreu R."/>
            <person name="Gonzalez-Prieto J.M."/>
            <person name="Kennell J.C."/>
            <person name="Molina L."/>
            <person name="Schirawski J."/>
            <person name="Mendoza-Mendoza A."/>
            <person name="Greilinger D."/>
            <person name="Muench K."/>
            <person name="Roessel N."/>
            <person name="Scherer M."/>
            <person name="Vranes M."/>
            <person name="Ladendorf O."/>
            <person name="Vincon V."/>
            <person name="Fuchs U."/>
            <person name="Sandrock B."/>
            <person name="Meng S."/>
            <person name="Ho E.C.H."/>
            <person name="Cahill M.J."/>
            <person name="Boyce K.J."/>
            <person name="Klose J."/>
            <person name="Klosterman S.J."/>
            <person name="Deelstra H.J."/>
            <person name="Ortiz-Castellanos L."/>
            <person name="Li W."/>
            <person name="Sanchez-Alonso P."/>
            <person name="Schreier P.H."/>
            <person name="Haeuser-Hahn I."/>
            <person name="Vaupel M."/>
            <person name="Koopmann E."/>
            <person name="Friedrich G."/>
            <person name="Voss H."/>
            <person name="Schlueter T."/>
            <person name="Margolis J."/>
            <person name="Platt D."/>
            <person name="Swimmer C."/>
            <person name="Gnirke A."/>
            <person name="Chen F."/>
            <person name="Vysotskaia V."/>
            <person name="Mannhaupt G."/>
            <person name="Gueldener U."/>
            <person name="Muensterkoetter M."/>
            <person name="Haase D."/>
            <person name="Oesterheld M."/>
            <person name="Mewes H.-W."/>
            <person name="Mauceli E.W."/>
            <person name="DeCaprio D."/>
            <person name="Wade C.M."/>
            <person name="Butler J."/>
            <person name="Young S.K."/>
            <person name="Jaffe D.B."/>
            <person name="Calvo S.E."/>
            <person name="Nusbaum C."/>
            <person name="Galagan J.E."/>
            <person name="Birren B.W."/>
        </authorList>
    </citation>
    <scope>NUCLEOTIDE SEQUENCE [LARGE SCALE GENOMIC DNA]</scope>
    <source>
        <strain>DSM 14603 / FGSC 9021 / UM521</strain>
    </source>
</reference>
<reference key="2">
    <citation type="submission" date="2014-09" db="EMBL/GenBank/DDBJ databases">
        <authorList>
            <person name="Gueldener U."/>
            <person name="Muensterkoetter M."/>
            <person name="Walter M.C."/>
            <person name="Mannhaupt G."/>
            <person name="Kahmann R."/>
        </authorList>
    </citation>
    <scope>GENOME REANNOTATION</scope>
    <source>
        <strain>DSM 14603 / FGSC 9021 / UM521</strain>
    </source>
</reference>
<dbReference type="EC" id="3.6.4.13"/>
<dbReference type="EMBL" id="CM003141">
    <property type="protein sequence ID" value="KIS71274.1"/>
    <property type="molecule type" value="Genomic_DNA"/>
</dbReference>
<dbReference type="RefSeq" id="XP_011387116.1">
    <property type="nucleotide sequence ID" value="XM_011388814.1"/>
</dbReference>
<dbReference type="SMR" id="Q4PFD9"/>
<dbReference type="FunCoup" id="Q4PFD9">
    <property type="interactions" value="816"/>
</dbReference>
<dbReference type="STRING" id="237631.Q4PFD9"/>
<dbReference type="EnsemblFungi" id="KIS71274">
    <property type="protein sequence ID" value="KIS71274"/>
    <property type="gene ID" value="UMAG_01174"/>
</dbReference>
<dbReference type="GeneID" id="23562272"/>
<dbReference type="KEGG" id="uma:UMAG_01174"/>
<dbReference type="VEuPathDB" id="FungiDB:UMAG_01174"/>
<dbReference type="eggNOG" id="KOG0334">
    <property type="taxonomic scope" value="Eukaryota"/>
</dbReference>
<dbReference type="HOGENOM" id="CLU_003041_0_2_1"/>
<dbReference type="InParanoid" id="Q4PFD9"/>
<dbReference type="OMA" id="WEREEYW"/>
<dbReference type="OrthoDB" id="196131at2759"/>
<dbReference type="Proteomes" id="UP000000561">
    <property type="component" value="Chromosome 2"/>
</dbReference>
<dbReference type="GO" id="GO:0005634">
    <property type="term" value="C:nucleus"/>
    <property type="evidence" value="ECO:0000318"/>
    <property type="project" value="GO_Central"/>
</dbReference>
<dbReference type="GO" id="GO:0005524">
    <property type="term" value="F:ATP binding"/>
    <property type="evidence" value="ECO:0007669"/>
    <property type="project" value="UniProtKB-KW"/>
</dbReference>
<dbReference type="GO" id="GO:0016887">
    <property type="term" value="F:ATP hydrolysis activity"/>
    <property type="evidence" value="ECO:0007669"/>
    <property type="project" value="RHEA"/>
</dbReference>
<dbReference type="GO" id="GO:0003676">
    <property type="term" value="F:nucleic acid binding"/>
    <property type="evidence" value="ECO:0007669"/>
    <property type="project" value="InterPro"/>
</dbReference>
<dbReference type="GO" id="GO:0003724">
    <property type="term" value="F:RNA helicase activity"/>
    <property type="evidence" value="ECO:0007669"/>
    <property type="project" value="UniProtKB-EC"/>
</dbReference>
<dbReference type="GO" id="GO:0000398">
    <property type="term" value="P:mRNA splicing, via spliceosome"/>
    <property type="evidence" value="ECO:0000318"/>
    <property type="project" value="GO_Central"/>
</dbReference>
<dbReference type="CDD" id="cd17953">
    <property type="entry name" value="DEADc_DDX46"/>
    <property type="match status" value="1"/>
</dbReference>
<dbReference type="CDD" id="cd22474">
    <property type="entry name" value="KH-I_PRP5_like"/>
    <property type="match status" value="1"/>
</dbReference>
<dbReference type="CDD" id="cd18787">
    <property type="entry name" value="SF2_C_DEAD"/>
    <property type="match status" value="1"/>
</dbReference>
<dbReference type="FunFam" id="3.40.50.300:FF:000079">
    <property type="entry name" value="probable ATP-dependent RNA helicase DDX17"/>
    <property type="match status" value="1"/>
</dbReference>
<dbReference type="Gene3D" id="3.40.50.300">
    <property type="entry name" value="P-loop containing nucleotide triphosphate hydrolases"/>
    <property type="match status" value="2"/>
</dbReference>
<dbReference type="InterPro" id="IPR011545">
    <property type="entry name" value="DEAD/DEAH_box_helicase_dom"/>
</dbReference>
<dbReference type="InterPro" id="IPR014001">
    <property type="entry name" value="Helicase_ATP-bd"/>
</dbReference>
<dbReference type="InterPro" id="IPR001650">
    <property type="entry name" value="Helicase_C-like"/>
</dbReference>
<dbReference type="InterPro" id="IPR027417">
    <property type="entry name" value="P-loop_NTPase"/>
</dbReference>
<dbReference type="InterPro" id="IPR056149">
    <property type="entry name" value="PRP5/DDX46/KHDC4_KH"/>
</dbReference>
<dbReference type="InterPro" id="IPR000629">
    <property type="entry name" value="RNA-helicase_DEAD-box_CS"/>
</dbReference>
<dbReference type="InterPro" id="IPR014014">
    <property type="entry name" value="RNA_helicase_DEAD_Q_motif"/>
</dbReference>
<dbReference type="PANTHER" id="PTHR47958">
    <property type="entry name" value="ATP-DEPENDENT RNA HELICASE DBP3"/>
    <property type="match status" value="1"/>
</dbReference>
<dbReference type="Pfam" id="PF00270">
    <property type="entry name" value="DEAD"/>
    <property type="match status" value="1"/>
</dbReference>
<dbReference type="Pfam" id="PF00271">
    <property type="entry name" value="Helicase_C"/>
    <property type="match status" value="1"/>
</dbReference>
<dbReference type="Pfam" id="PF23469">
    <property type="entry name" value="KH_12"/>
    <property type="match status" value="1"/>
</dbReference>
<dbReference type="SMART" id="SM00487">
    <property type="entry name" value="DEXDc"/>
    <property type="match status" value="1"/>
</dbReference>
<dbReference type="SMART" id="SM00490">
    <property type="entry name" value="HELICc"/>
    <property type="match status" value="1"/>
</dbReference>
<dbReference type="SUPFAM" id="SSF52540">
    <property type="entry name" value="P-loop containing nucleoside triphosphate hydrolases"/>
    <property type="match status" value="2"/>
</dbReference>
<dbReference type="PROSITE" id="PS00039">
    <property type="entry name" value="DEAD_ATP_HELICASE"/>
    <property type="match status" value="1"/>
</dbReference>
<dbReference type="PROSITE" id="PS51192">
    <property type="entry name" value="HELICASE_ATP_BIND_1"/>
    <property type="match status" value="1"/>
</dbReference>
<dbReference type="PROSITE" id="PS51194">
    <property type="entry name" value="HELICASE_CTER"/>
    <property type="match status" value="1"/>
</dbReference>
<dbReference type="PROSITE" id="PS51195">
    <property type="entry name" value="Q_MOTIF"/>
    <property type="match status" value="1"/>
</dbReference>
<accession>Q4PFD9</accession>
<accession>A0A0D1E5J5</accession>
<protein>
    <recommendedName>
        <fullName>Pre-mRNA-processing ATP-dependent RNA helicase PRP5</fullName>
        <ecNumber>3.6.4.13</ecNumber>
    </recommendedName>
</protein>
<organism>
    <name type="scientific">Mycosarcoma maydis</name>
    <name type="common">Corn smut fungus</name>
    <name type="synonym">Ustilago maydis</name>
    <dbReference type="NCBI Taxonomy" id="5270"/>
    <lineage>
        <taxon>Eukaryota</taxon>
        <taxon>Fungi</taxon>
        <taxon>Dikarya</taxon>
        <taxon>Basidiomycota</taxon>
        <taxon>Ustilaginomycotina</taxon>
        <taxon>Ustilaginomycetes</taxon>
        <taxon>Ustilaginales</taxon>
        <taxon>Ustilaginaceae</taxon>
        <taxon>Mycosarcoma</taxon>
    </lineage>
</organism>
<gene>
    <name type="primary">PRP5</name>
    <name type="ORF">UMAG_01174</name>
</gene>
<sequence>MSGYDNRDDYRHSSSSSHHRSRNSKHDSSSSSYRSHGYAPTRRRSRSPSSYHSSSRSHRDHTTDPYPNGSGHDRRHDRDRNRERDRRDHDSPIEAAPSPDGRRFHVEGAPRQGGRRRWDEGAPTPPTAAAPVHVSDPTRSSLNTQLPSRPIVAPPGMAPGPPPSLPSSTPIVPSTGISISPEEQAKLAKKARLEAWRKEQAAKKALEEARQRARSIASAVAPSSQRTESFSSSSTPQTAPTSINAAGLRTLSLRTDPSRTTAQNRSRTMMDDASESSKRIHLSRLGDLPPLDPSIDTAHIATTSVDAEDDDHQLGVAPPTQGSSAAAMDVDDDDEEEDPLDAFMLTVKSQVAQVNDDDRRKASASGGHERTQAKSKAVVLGRDDSDGEAEDQYEELDELDRVGMATEDLLALAAKKVKKKDLVTVDHSAIDYEPFNKAFYHPPAEIQDMSEELANQIRLEMDAITVRGRDCPKPLTKWSHCGLPASCLDVIKRLGYSAPTPIQSQAMPAIMSGRDIIGVAKTGSGKTMAFLLPMFRHIKDQRPVEPSEGPVGIIMTPTRELAVQIYREMRPFIKALGLRAACVYGGAPISEQIAEMKKTADIVVATPGRLIDLLTANSGRVTNLYRVTYLVLDEADRMFDMGFEPQVMKILNNIRPDRQTVLFSATFPKQMESLARKVLKNKPLEITVGGRSVVAAEIEQIVEVRSEDTKFHRLLEILGELYNREKDARTLIFVDRQEAADDLLKDLIRKGYVTMSLHGGKDQVDRDETISDFKAGNVPIVTATSVAARGLDVKQLKLVINYDVPNHMEDYVHRAGRTGRAGQKGTCITFITPEQDRYARDIIAALKASAAHVPPELEAMAASFKEKLAAGKAKAAGSGFGGKGLDRFELDREKTLKAQKSAYGEADDDAKAAAAGDSSEDKAKTGAPPGASSSEDQLSKIQGMKIEIMQGAAPESVRDNKTLSASQEASAAAAAAAAARSKAEPEQELKEAAQLKAQEAALEAAKAHGADTTKLAAVLENIRRQANARKEAAKNSELDKHKDRKARDPDATDYHAIVPINDFPQRARWRVTNKETMRHLIESTGASITNKGVFYKEGTEPQPGEPPKLQLLIESNTKSMVEDAVREIQRLLVEATQAVLEAEARNPGTTGRYTVV</sequence>
<feature type="chain" id="PRO_0000232367" description="Pre-mRNA-processing ATP-dependent RNA helicase PRP5">
    <location>
        <begin position="1"/>
        <end position="1156"/>
    </location>
</feature>
<feature type="domain" description="Helicase ATP-binding" evidence="2">
    <location>
        <begin position="507"/>
        <end position="685"/>
    </location>
</feature>
<feature type="domain" description="Helicase C-terminal" evidence="3">
    <location>
        <begin position="697"/>
        <end position="861"/>
    </location>
</feature>
<feature type="region of interest" description="Disordered" evidence="4">
    <location>
        <begin position="1"/>
        <end position="177"/>
    </location>
</feature>
<feature type="region of interest" description="Disordered" evidence="4">
    <location>
        <begin position="216"/>
        <end position="337"/>
    </location>
</feature>
<feature type="region of interest" description="Disordered" evidence="4">
    <location>
        <begin position="351"/>
        <end position="390"/>
    </location>
</feature>
<feature type="region of interest" description="Disordered" evidence="4">
    <location>
        <begin position="900"/>
        <end position="937"/>
    </location>
</feature>
<feature type="region of interest" description="Disordered" evidence="4">
    <location>
        <begin position="1028"/>
        <end position="1049"/>
    </location>
</feature>
<feature type="short sequence motif" description="Q motif">
    <location>
        <begin position="476"/>
        <end position="504"/>
    </location>
</feature>
<feature type="short sequence motif" description="DEAD box">
    <location>
        <begin position="633"/>
        <end position="636"/>
    </location>
</feature>
<feature type="compositionally biased region" description="Basic and acidic residues" evidence="4">
    <location>
        <begin position="1"/>
        <end position="12"/>
    </location>
</feature>
<feature type="compositionally biased region" description="Basic and acidic residues" evidence="4">
    <location>
        <begin position="71"/>
        <end position="92"/>
    </location>
</feature>
<feature type="compositionally biased region" description="Polar residues" evidence="4">
    <location>
        <begin position="137"/>
        <end position="147"/>
    </location>
</feature>
<feature type="compositionally biased region" description="Pro residues" evidence="4">
    <location>
        <begin position="152"/>
        <end position="165"/>
    </location>
</feature>
<feature type="compositionally biased region" description="Low complexity" evidence="4">
    <location>
        <begin position="166"/>
        <end position="175"/>
    </location>
</feature>
<feature type="compositionally biased region" description="Low complexity" evidence="4">
    <location>
        <begin position="222"/>
        <end position="242"/>
    </location>
</feature>
<feature type="compositionally biased region" description="Polar residues" evidence="4">
    <location>
        <begin position="252"/>
        <end position="267"/>
    </location>
</feature>
<feature type="compositionally biased region" description="Basic and acidic residues" evidence="4">
    <location>
        <begin position="356"/>
        <end position="372"/>
    </location>
</feature>
<feature type="binding site" evidence="2">
    <location>
        <begin position="520"/>
        <end position="527"/>
    </location>
    <ligand>
        <name>ATP</name>
        <dbReference type="ChEBI" id="CHEBI:30616"/>
    </ligand>
</feature>
<proteinExistence type="inferred from homology"/>
<evidence type="ECO:0000250" key="1"/>
<evidence type="ECO:0000255" key="2">
    <source>
        <dbReference type="PROSITE-ProRule" id="PRU00541"/>
    </source>
</evidence>
<evidence type="ECO:0000255" key="3">
    <source>
        <dbReference type="PROSITE-ProRule" id="PRU00542"/>
    </source>
</evidence>
<evidence type="ECO:0000256" key="4">
    <source>
        <dbReference type="SAM" id="MobiDB-lite"/>
    </source>
</evidence>
<evidence type="ECO:0000305" key="5"/>